<name>TM216_RAT</name>
<comment type="function">
    <text evidence="1">Part of the tectonic-like complex which is required for tissue-specific ciliogenesis and may regulate ciliary membrane composition.</text>
</comment>
<comment type="subunit">
    <text evidence="2">Part of the tectonic-like complex (also named B9 complex). Interacts with TMEM107.</text>
</comment>
<comment type="subcellular location">
    <subcellularLocation>
        <location evidence="5">Membrane</location>
        <topology evidence="5">Multi-pass membrane protein</topology>
    </subcellularLocation>
    <subcellularLocation>
        <location evidence="1">Cytoplasm</location>
        <location evidence="1">Cytoskeleton</location>
        <location evidence="1">Cilium basal body</location>
    </subcellularLocation>
    <text evidence="1">Localizes at the transition zone, a region between the basal body and the ciliary axoneme.</text>
</comment>
<comment type="alternative products">
    <event type="alternative splicing"/>
    <isoform>
        <id>B6ID01-1</id>
        <name>1</name>
        <sequence type="displayed"/>
    </isoform>
    <isoform>
        <id>B6ID01-2</id>
        <name>2</name>
        <sequence type="described" ref="VSP_040298"/>
    </isoform>
    <isoform>
        <id>B6ID01-3</id>
        <name>3</name>
        <sequence type="described" ref="VSP_040298 VSP_040299"/>
    </isoform>
</comment>
<comment type="miscellaneous">
    <molecule>Isoform 3</molecule>
    <text evidence="5">Due to intron retention.</text>
</comment>
<keyword id="KW-0025">Alternative splicing</keyword>
<keyword id="KW-0966">Cell projection</keyword>
<keyword id="KW-0970">Cilium biogenesis/degradation</keyword>
<keyword id="KW-0963">Cytoplasm</keyword>
<keyword id="KW-0206">Cytoskeleton</keyword>
<keyword id="KW-0472">Membrane</keyword>
<keyword id="KW-1185">Reference proteome</keyword>
<keyword id="KW-0812">Transmembrane</keyword>
<keyword id="KW-1133">Transmembrane helix</keyword>
<gene>
    <name type="primary">Tmem216</name>
</gene>
<evidence type="ECO:0000250" key="1"/>
<evidence type="ECO:0000250" key="2">
    <source>
        <dbReference type="UniProtKB" id="Q9P0N5"/>
    </source>
</evidence>
<evidence type="ECO:0000255" key="3"/>
<evidence type="ECO:0000303" key="4">
    <source>
    </source>
</evidence>
<evidence type="ECO:0000305" key="5"/>
<organism>
    <name type="scientific">Rattus norvegicus</name>
    <name type="common">Rat</name>
    <dbReference type="NCBI Taxonomy" id="10116"/>
    <lineage>
        <taxon>Eukaryota</taxon>
        <taxon>Metazoa</taxon>
        <taxon>Chordata</taxon>
        <taxon>Craniata</taxon>
        <taxon>Vertebrata</taxon>
        <taxon>Euteleostomi</taxon>
        <taxon>Mammalia</taxon>
        <taxon>Eutheria</taxon>
        <taxon>Euarchontoglires</taxon>
        <taxon>Glires</taxon>
        <taxon>Rodentia</taxon>
        <taxon>Myomorpha</taxon>
        <taxon>Muroidea</taxon>
        <taxon>Muridae</taxon>
        <taxon>Murinae</taxon>
        <taxon>Rattus</taxon>
    </lineage>
</organism>
<reference key="1">
    <citation type="journal article" date="2004" name="Nature">
        <title>Genome sequence of the Brown Norway rat yields insights into mammalian evolution.</title>
        <authorList>
            <person name="Gibbs R.A."/>
            <person name="Weinstock G.M."/>
            <person name="Metzker M.L."/>
            <person name="Muzny D.M."/>
            <person name="Sodergren E.J."/>
            <person name="Scherer S."/>
            <person name="Scott G."/>
            <person name="Steffen D."/>
            <person name="Worley K.C."/>
            <person name="Burch P.E."/>
            <person name="Okwuonu G."/>
            <person name="Hines S."/>
            <person name="Lewis L."/>
            <person name="Deramo C."/>
            <person name="Delgado O."/>
            <person name="Dugan-Rocha S."/>
            <person name="Miner G."/>
            <person name="Morgan M."/>
            <person name="Hawes A."/>
            <person name="Gill R."/>
            <person name="Holt R.A."/>
            <person name="Adams M.D."/>
            <person name="Amanatides P.G."/>
            <person name="Baden-Tillson H."/>
            <person name="Barnstead M."/>
            <person name="Chin S."/>
            <person name="Evans C.A."/>
            <person name="Ferriera S."/>
            <person name="Fosler C."/>
            <person name="Glodek A."/>
            <person name="Gu Z."/>
            <person name="Jennings D."/>
            <person name="Kraft C.L."/>
            <person name="Nguyen T."/>
            <person name="Pfannkoch C.M."/>
            <person name="Sitter C."/>
            <person name="Sutton G.G."/>
            <person name="Venter J.C."/>
            <person name="Woodage T."/>
            <person name="Smith D."/>
            <person name="Lee H.-M."/>
            <person name="Gustafson E."/>
            <person name="Cahill P."/>
            <person name="Kana A."/>
            <person name="Doucette-Stamm L."/>
            <person name="Weinstock K."/>
            <person name="Fechtel K."/>
            <person name="Weiss R.B."/>
            <person name="Dunn D.M."/>
            <person name="Green E.D."/>
            <person name="Blakesley R.W."/>
            <person name="Bouffard G.G."/>
            <person name="De Jong P.J."/>
            <person name="Osoegawa K."/>
            <person name="Zhu B."/>
            <person name="Marra M."/>
            <person name="Schein J."/>
            <person name="Bosdet I."/>
            <person name="Fjell C."/>
            <person name="Jones S."/>
            <person name="Krzywinski M."/>
            <person name="Mathewson C."/>
            <person name="Siddiqui A."/>
            <person name="Wye N."/>
            <person name="McPherson J."/>
            <person name="Zhao S."/>
            <person name="Fraser C.M."/>
            <person name="Shetty J."/>
            <person name="Shatsman S."/>
            <person name="Geer K."/>
            <person name="Chen Y."/>
            <person name="Abramzon S."/>
            <person name="Nierman W.C."/>
            <person name="Havlak P.H."/>
            <person name="Chen R."/>
            <person name="Durbin K.J."/>
            <person name="Egan A."/>
            <person name="Ren Y."/>
            <person name="Song X.-Z."/>
            <person name="Li B."/>
            <person name="Liu Y."/>
            <person name="Qin X."/>
            <person name="Cawley S."/>
            <person name="Cooney A.J."/>
            <person name="D'Souza L.M."/>
            <person name="Martin K."/>
            <person name="Wu J.Q."/>
            <person name="Gonzalez-Garay M.L."/>
            <person name="Jackson A.R."/>
            <person name="Kalafus K.J."/>
            <person name="McLeod M.P."/>
            <person name="Milosavljevic A."/>
            <person name="Virk D."/>
            <person name="Volkov A."/>
            <person name="Wheeler D.A."/>
            <person name="Zhang Z."/>
            <person name="Bailey J.A."/>
            <person name="Eichler E.E."/>
            <person name="Tuzun E."/>
            <person name="Birney E."/>
            <person name="Mongin E."/>
            <person name="Ureta-Vidal A."/>
            <person name="Woodwark C."/>
            <person name="Zdobnov E."/>
            <person name="Bork P."/>
            <person name="Suyama M."/>
            <person name="Torrents D."/>
            <person name="Alexandersson M."/>
            <person name="Trask B.J."/>
            <person name="Young J.M."/>
            <person name="Huang H."/>
            <person name="Wang H."/>
            <person name="Xing H."/>
            <person name="Daniels S."/>
            <person name="Gietzen D."/>
            <person name="Schmidt J."/>
            <person name="Stevens K."/>
            <person name="Vitt U."/>
            <person name="Wingrove J."/>
            <person name="Camara F."/>
            <person name="Mar Alba M."/>
            <person name="Abril J.F."/>
            <person name="Guigo R."/>
            <person name="Smit A."/>
            <person name="Dubchak I."/>
            <person name="Rubin E.M."/>
            <person name="Couronne O."/>
            <person name="Poliakov A."/>
            <person name="Huebner N."/>
            <person name="Ganten D."/>
            <person name="Goesele C."/>
            <person name="Hummel O."/>
            <person name="Kreitler T."/>
            <person name="Lee Y.-A."/>
            <person name="Monti J."/>
            <person name="Schulz H."/>
            <person name="Zimdahl H."/>
            <person name="Himmelbauer H."/>
            <person name="Lehrach H."/>
            <person name="Jacob H.J."/>
            <person name="Bromberg S."/>
            <person name="Gullings-Handley J."/>
            <person name="Jensen-Seaman M.I."/>
            <person name="Kwitek A.E."/>
            <person name="Lazar J."/>
            <person name="Pasko D."/>
            <person name="Tonellato P.J."/>
            <person name="Twigger S."/>
            <person name="Ponting C.P."/>
            <person name="Duarte J.M."/>
            <person name="Rice S."/>
            <person name="Goodstadt L."/>
            <person name="Beatson S.A."/>
            <person name="Emes R.D."/>
            <person name="Winter E.E."/>
            <person name="Webber C."/>
            <person name="Brandt P."/>
            <person name="Nyakatura G."/>
            <person name="Adetobi M."/>
            <person name="Chiaromonte F."/>
            <person name="Elnitski L."/>
            <person name="Eswara P."/>
            <person name="Hardison R.C."/>
            <person name="Hou M."/>
            <person name="Kolbe D."/>
            <person name="Makova K."/>
            <person name="Miller W."/>
            <person name="Nekrutenko A."/>
            <person name="Riemer C."/>
            <person name="Schwartz S."/>
            <person name="Taylor J."/>
            <person name="Yang S."/>
            <person name="Zhang Y."/>
            <person name="Lindpaintner K."/>
            <person name="Andrews T.D."/>
            <person name="Caccamo M."/>
            <person name="Clamp M."/>
            <person name="Clarke L."/>
            <person name="Curwen V."/>
            <person name="Durbin R.M."/>
            <person name="Eyras E."/>
            <person name="Searle S.M."/>
            <person name="Cooper G.M."/>
            <person name="Batzoglou S."/>
            <person name="Brudno M."/>
            <person name="Sidow A."/>
            <person name="Stone E.A."/>
            <person name="Payseur B.A."/>
            <person name="Bourque G."/>
            <person name="Lopez-Otin C."/>
            <person name="Puente X.S."/>
            <person name="Chakrabarti K."/>
            <person name="Chatterji S."/>
            <person name="Dewey C."/>
            <person name="Pachter L."/>
            <person name="Bray N."/>
            <person name="Yap V.B."/>
            <person name="Caspi A."/>
            <person name="Tesler G."/>
            <person name="Pevzner P.A."/>
            <person name="Haussler D."/>
            <person name="Roskin K.M."/>
            <person name="Baertsch R."/>
            <person name="Clawson H."/>
            <person name="Furey T.S."/>
            <person name="Hinrichs A.S."/>
            <person name="Karolchik D."/>
            <person name="Kent W.J."/>
            <person name="Rosenbloom K.R."/>
            <person name="Trumbower H."/>
            <person name="Weirauch M."/>
            <person name="Cooper D.N."/>
            <person name="Stenson P.D."/>
            <person name="Ma B."/>
            <person name="Brent M."/>
            <person name="Arumugam M."/>
            <person name="Shteynberg D."/>
            <person name="Copley R.R."/>
            <person name="Taylor M.S."/>
            <person name="Riethman H."/>
            <person name="Mudunuri U."/>
            <person name="Peterson J."/>
            <person name="Guyer M."/>
            <person name="Felsenfeld A."/>
            <person name="Old S."/>
            <person name="Mockrin S."/>
            <person name="Collins F.S."/>
        </authorList>
    </citation>
    <scope>NUCLEOTIDE SEQUENCE [LARGE SCALE GENOMIC DNA]</scope>
    <source>
        <strain>Brown Norway</strain>
    </source>
</reference>
<reference key="2">
    <citation type="submission" date="2005-07" db="EMBL/GenBank/DDBJ databases">
        <authorList>
            <person name="Mural R.J."/>
            <person name="Adams M.D."/>
            <person name="Myers E.W."/>
            <person name="Smith H.O."/>
            <person name="Venter J.C."/>
        </authorList>
    </citation>
    <scope>NUCLEOTIDE SEQUENCE [LARGE SCALE GENOMIC DNA]</scope>
    <source>
        <strain>Brown Norway</strain>
    </source>
</reference>
<reference key="3">
    <citation type="journal article" date="2004" name="Genome Res.">
        <title>The status, quality, and expansion of the NIH full-length cDNA project: the Mammalian Gene Collection (MGC).</title>
        <authorList>
            <consortium name="The MGC Project Team"/>
        </authorList>
    </citation>
    <scope>NUCLEOTIDE SEQUENCE [LARGE SCALE MRNA] (ISOFORMS 1 AND 3)</scope>
    <source>
        <tissue>Pituitary</tissue>
        <tissue>Testis</tissue>
    </source>
</reference>
<sequence length="141" mass="16174">MAPRDKRLSSTPLEILFFLNGWYYATYFLLELLIFLYKGLLLPYPTANLVLDVVMLLLYLGIEVIRLFFGTKGNLCQRKMPLGISVALTFPSAMMASYYLLLQTYVLRLEAIMNSILLFFCGSELLLEMLTLATFSSMDRI</sequence>
<accession>B6ID01</accession>
<accession>D4A451</accession>
<proteinExistence type="evidence at transcript level"/>
<feature type="chain" id="PRO_0000402544" description="Transmembrane protein 216">
    <location>
        <begin position="1"/>
        <end position="141"/>
    </location>
</feature>
<feature type="transmembrane region" description="Helical" evidence="3">
    <location>
        <begin position="15"/>
        <end position="35"/>
    </location>
</feature>
<feature type="transmembrane region" description="Helical" evidence="3">
    <location>
        <begin position="49"/>
        <end position="69"/>
    </location>
</feature>
<feature type="transmembrane region" description="Helical" evidence="3">
    <location>
        <begin position="82"/>
        <end position="102"/>
    </location>
</feature>
<feature type="transmembrane region" description="Helical" evidence="3">
    <location>
        <begin position="115"/>
        <end position="135"/>
    </location>
</feature>
<feature type="splice variant" id="VSP_040298" description="In isoform 2 and isoform 3." evidence="4">
    <location>
        <begin position="1"/>
        <end position="54"/>
    </location>
</feature>
<feature type="splice variant" id="VSP_040299" description="In isoform 3." evidence="4">
    <original>SMDRI</original>
    <variation>RYNC</variation>
    <location>
        <begin position="137"/>
        <end position="141"/>
    </location>
</feature>
<feature type="sequence conflict" description="In Ref. 3; CB568391." evidence="5" ref="3">
    <original>FL</original>
    <variation>YQ</variation>
    <location>
        <begin position="28"/>
        <end position="29"/>
    </location>
</feature>
<feature type="sequence conflict" description="In Ref. 3; CB568391." evidence="5" ref="3">
    <original>L</original>
    <variation>H</variation>
    <location>
        <position position="40"/>
    </location>
</feature>
<feature type="sequence conflict" description="In Ref. 3; CB568391." evidence="5" ref="3">
    <original>L</original>
    <variation>Q</variation>
    <location>
        <position position="51"/>
    </location>
</feature>
<feature type="sequence conflict" description="In Ref. 3; CB568391." evidence="5" ref="3">
    <original>M</original>
    <variation>R</variation>
    <location>
        <position position="95"/>
    </location>
</feature>
<feature type="sequence conflict" description="In Ref. 3; CB568391." evidence="5" ref="3">
    <original>ILLFF</original>
    <variation>NLLFI</variation>
    <location>
        <begin position="116"/>
        <end position="120"/>
    </location>
</feature>
<feature type="sequence conflict" description="In Ref. 3; CB568391." evidence="5" ref="3">
    <original>L</original>
    <variation>H</variation>
    <location>
        <position position="127"/>
    </location>
</feature>
<dbReference type="EMBL" id="CH473953">
    <property type="protein sequence ID" value="EDM12818.1"/>
    <property type="molecule type" value="Genomic_DNA"/>
</dbReference>
<dbReference type="EMBL" id="CH473953">
    <property type="protein sequence ID" value="EDM12819.1"/>
    <property type="molecule type" value="Genomic_DNA"/>
</dbReference>
<dbReference type="EMBL" id="CH473953">
    <property type="protein sequence ID" value="EDM12820.1"/>
    <property type="molecule type" value="Genomic_DNA"/>
</dbReference>
<dbReference type="EMBL" id="CH473953">
    <property type="protein sequence ID" value="EDM12821.1"/>
    <property type="molecule type" value="Genomic_DNA"/>
</dbReference>
<dbReference type="EMBL" id="BC168207">
    <property type="protein sequence ID" value="AAI68207.1"/>
    <property type="molecule type" value="mRNA"/>
</dbReference>
<dbReference type="EMBL" id="CB568391">
    <property type="status" value="NOT_ANNOTATED_CDS"/>
    <property type="molecule type" value="mRNA"/>
</dbReference>
<dbReference type="RefSeq" id="NP_001257968.1">
    <molecule id="B6ID01-1"/>
    <property type="nucleotide sequence ID" value="NM_001271039.1"/>
</dbReference>
<dbReference type="RefSeq" id="XP_006231107.1">
    <molecule id="B6ID01-2"/>
    <property type="nucleotide sequence ID" value="XM_006231045.5"/>
</dbReference>
<dbReference type="SMR" id="B6ID01"/>
<dbReference type="FunCoup" id="B6ID01">
    <property type="interactions" value="825"/>
</dbReference>
<dbReference type="STRING" id="10116.ENSRNOP00000028079"/>
<dbReference type="PaxDb" id="10116-ENSRNOP00000028079"/>
<dbReference type="GeneID" id="361727"/>
<dbReference type="KEGG" id="rno:361727"/>
<dbReference type="AGR" id="RGD:1304607"/>
<dbReference type="CTD" id="51259"/>
<dbReference type="RGD" id="1304607">
    <property type="gene designation" value="Tmem216"/>
</dbReference>
<dbReference type="VEuPathDB" id="HostDB:ENSRNOG00000020692"/>
<dbReference type="eggNOG" id="KOG4502">
    <property type="taxonomic scope" value="Eukaryota"/>
</dbReference>
<dbReference type="HOGENOM" id="CLU_135948_0_0_1"/>
<dbReference type="InParanoid" id="B6ID01"/>
<dbReference type="OrthoDB" id="54779at9989"/>
<dbReference type="PhylomeDB" id="B6ID01"/>
<dbReference type="Reactome" id="R-RNO-5620912">
    <property type="pathway name" value="Anchoring of the basal body to the plasma membrane"/>
</dbReference>
<dbReference type="PRO" id="PR:B6ID01"/>
<dbReference type="Proteomes" id="UP000002494">
    <property type="component" value="Chromosome 1"/>
</dbReference>
<dbReference type="Proteomes" id="UP000234681">
    <property type="component" value="Chromosome 1"/>
</dbReference>
<dbReference type="Bgee" id="ENSRNOG00000020692">
    <property type="expression patterns" value="Expressed in ovary and 20 other cell types or tissues"/>
</dbReference>
<dbReference type="GO" id="GO:0035869">
    <property type="term" value="C:ciliary transition zone"/>
    <property type="evidence" value="ECO:0000266"/>
    <property type="project" value="RGD"/>
</dbReference>
<dbReference type="GO" id="GO:0005929">
    <property type="term" value="C:cilium"/>
    <property type="evidence" value="ECO:0000250"/>
    <property type="project" value="UniProtKB"/>
</dbReference>
<dbReference type="GO" id="GO:0005737">
    <property type="term" value="C:cytoplasm"/>
    <property type="evidence" value="ECO:0007669"/>
    <property type="project" value="UniProtKB-KW"/>
</dbReference>
<dbReference type="GO" id="GO:0005856">
    <property type="term" value="C:cytoskeleton"/>
    <property type="evidence" value="ECO:0007669"/>
    <property type="project" value="UniProtKB-KW"/>
</dbReference>
<dbReference type="GO" id="GO:0016020">
    <property type="term" value="C:membrane"/>
    <property type="evidence" value="ECO:0007669"/>
    <property type="project" value="UniProtKB-SubCell"/>
</dbReference>
<dbReference type="GO" id="GO:0036038">
    <property type="term" value="C:MKS complex"/>
    <property type="evidence" value="ECO:0000250"/>
    <property type="project" value="UniProtKB"/>
</dbReference>
<dbReference type="GO" id="GO:0060271">
    <property type="term" value="P:cilium assembly"/>
    <property type="evidence" value="ECO:0000250"/>
    <property type="project" value="UniProtKB"/>
</dbReference>
<dbReference type="GO" id="GO:1905515">
    <property type="term" value="P:non-motile cilium assembly"/>
    <property type="evidence" value="ECO:0000318"/>
    <property type="project" value="GO_Central"/>
</dbReference>
<dbReference type="InterPro" id="IPR019184">
    <property type="entry name" value="Uncharacterised_TM-17"/>
</dbReference>
<dbReference type="PANTHER" id="PTHR13531">
    <property type="entry name" value="GEO07735P1-RELATED-RELATED"/>
    <property type="match status" value="1"/>
</dbReference>
<dbReference type="PANTHER" id="PTHR13531:SF5">
    <property type="entry name" value="TRANSMEMBRANE PROTEIN 216"/>
    <property type="match status" value="1"/>
</dbReference>
<dbReference type="Pfam" id="PF09799">
    <property type="entry name" value="Transmemb_17"/>
    <property type="match status" value="1"/>
</dbReference>
<protein>
    <recommendedName>
        <fullName>Transmembrane protein 216</fullName>
    </recommendedName>
</protein>